<proteinExistence type="inferred from homology"/>
<keyword id="KW-0665">Pyrimidine biosynthesis</keyword>
<keyword id="KW-0808">Transferase</keyword>
<organism>
    <name type="scientific">Chlorobaculum parvum (strain DSM 263 / NCIMB 8327)</name>
    <name type="common">Chlorobium vibrioforme subsp. thiosulfatophilum</name>
    <dbReference type="NCBI Taxonomy" id="517417"/>
    <lineage>
        <taxon>Bacteria</taxon>
        <taxon>Pseudomonadati</taxon>
        <taxon>Chlorobiota</taxon>
        <taxon>Chlorobiia</taxon>
        <taxon>Chlorobiales</taxon>
        <taxon>Chlorobiaceae</taxon>
        <taxon>Chlorobaculum</taxon>
    </lineage>
</organism>
<sequence>MNHLTGLFGLPASTLVELLDLAAGYREGLNREPETFAPLLSNRRIALVFFENSTRTRFSFELAARHLGAGTLSFTAASSSVSKGETLSDTIRNLEAMKVDAFVLRHPSSGAADFVTSITNRPVINAGDGTHEHPTQALLDILTLRSYFGKIEGLKIMILGDILHSRVARSNILGLKTLGAEIAVCAPSTLLPGRIDQLGVQVFTNLDKALAWADAAIVLRLQLERATGGYIPSLEEYSAGYGLTDEKFDRLKRLMPVLHPGPINREIEISNMVADRIQPPGYSSSMLMEQVTNGVAVRMAVLHRLLAK</sequence>
<evidence type="ECO:0000255" key="1">
    <source>
        <dbReference type="HAMAP-Rule" id="MF_00001"/>
    </source>
</evidence>
<reference key="1">
    <citation type="submission" date="2008-06" db="EMBL/GenBank/DDBJ databases">
        <title>Complete sequence of Chlorobaculum parvum NCIB 8327.</title>
        <authorList>
            <consortium name="US DOE Joint Genome Institute"/>
            <person name="Lucas S."/>
            <person name="Copeland A."/>
            <person name="Lapidus A."/>
            <person name="Glavina del Rio T."/>
            <person name="Dalin E."/>
            <person name="Tice H."/>
            <person name="Bruce D."/>
            <person name="Goodwin L."/>
            <person name="Pitluck S."/>
            <person name="Schmutz J."/>
            <person name="Larimer F."/>
            <person name="Land M."/>
            <person name="Hauser L."/>
            <person name="Kyrpides N."/>
            <person name="Mikhailova N."/>
            <person name="Zhao F."/>
            <person name="Li T."/>
            <person name="Liu Z."/>
            <person name="Overmann J."/>
            <person name="Bryant D.A."/>
            <person name="Richardson P."/>
        </authorList>
    </citation>
    <scope>NUCLEOTIDE SEQUENCE [LARGE SCALE GENOMIC DNA]</scope>
    <source>
        <strain>DSM 263 / NCIMB 8327</strain>
    </source>
</reference>
<accession>B3QQ34</accession>
<dbReference type="EC" id="2.1.3.2" evidence="1"/>
<dbReference type="EMBL" id="CP001099">
    <property type="protein sequence ID" value="ACF12037.1"/>
    <property type="molecule type" value="Genomic_DNA"/>
</dbReference>
<dbReference type="RefSeq" id="WP_012502870.1">
    <property type="nucleotide sequence ID" value="NC_011027.1"/>
</dbReference>
<dbReference type="SMR" id="B3QQ34"/>
<dbReference type="STRING" id="517417.Cpar_1641"/>
<dbReference type="KEGG" id="cpc:Cpar_1641"/>
<dbReference type="eggNOG" id="COG0540">
    <property type="taxonomic scope" value="Bacteria"/>
</dbReference>
<dbReference type="HOGENOM" id="CLU_043846_2_0_10"/>
<dbReference type="OrthoDB" id="9774690at2"/>
<dbReference type="UniPathway" id="UPA00070">
    <property type="reaction ID" value="UER00116"/>
</dbReference>
<dbReference type="Proteomes" id="UP000008811">
    <property type="component" value="Chromosome"/>
</dbReference>
<dbReference type="GO" id="GO:0005829">
    <property type="term" value="C:cytosol"/>
    <property type="evidence" value="ECO:0007669"/>
    <property type="project" value="TreeGrafter"/>
</dbReference>
<dbReference type="GO" id="GO:0016597">
    <property type="term" value="F:amino acid binding"/>
    <property type="evidence" value="ECO:0007669"/>
    <property type="project" value="InterPro"/>
</dbReference>
<dbReference type="GO" id="GO:0004070">
    <property type="term" value="F:aspartate carbamoyltransferase activity"/>
    <property type="evidence" value="ECO:0007669"/>
    <property type="project" value="UniProtKB-UniRule"/>
</dbReference>
<dbReference type="GO" id="GO:0006207">
    <property type="term" value="P:'de novo' pyrimidine nucleobase biosynthetic process"/>
    <property type="evidence" value="ECO:0007669"/>
    <property type="project" value="InterPro"/>
</dbReference>
<dbReference type="GO" id="GO:0044205">
    <property type="term" value="P:'de novo' UMP biosynthetic process"/>
    <property type="evidence" value="ECO:0007669"/>
    <property type="project" value="UniProtKB-UniRule"/>
</dbReference>
<dbReference type="GO" id="GO:0006520">
    <property type="term" value="P:amino acid metabolic process"/>
    <property type="evidence" value="ECO:0007669"/>
    <property type="project" value="InterPro"/>
</dbReference>
<dbReference type="Gene3D" id="3.40.50.1370">
    <property type="entry name" value="Aspartate/ornithine carbamoyltransferase"/>
    <property type="match status" value="2"/>
</dbReference>
<dbReference type="HAMAP" id="MF_00001">
    <property type="entry name" value="Asp_carb_tr"/>
    <property type="match status" value="1"/>
</dbReference>
<dbReference type="InterPro" id="IPR006132">
    <property type="entry name" value="Asp/Orn_carbamoyltranf_P-bd"/>
</dbReference>
<dbReference type="InterPro" id="IPR006130">
    <property type="entry name" value="Asp/Orn_carbamoylTrfase"/>
</dbReference>
<dbReference type="InterPro" id="IPR036901">
    <property type="entry name" value="Asp/Orn_carbamoylTrfase_sf"/>
</dbReference>
<dbReference type="InterPro" id="IPR002082">
    <property type="entry name" value="Asp_carbamoyltransf"/>
</dbReference>
<dbReference type="InterPro" id="IPR006131">
    <property type="entry name" value="Asp_carbamoyltransf_Asp/Orn-bd"/>
</dbReference>
<dbReference type="NCBIfam" id="TIGR00670">
    <property type="entry name" value="asp_carb_tr"/>
    <property type="match status" value="1"/>
</dbReference>
<dbReference type="NCBIfam" id="NF002032">
    <property type="entry name" value="PRK00856.1"/>
    <property type="match status" value="1"/>
</dbReference>
<dbReference type="PANTHER" id="PTHR45753:SF6">
    <property type="entry name" value="ASPARTATE CARBAMOYLTRANSFERASE"/>
    <property type="match status" value="1"/>
</dbReference>
<dbReference type="PANTHER" id="PTHR45753">
    <property type="entry name" value="ORNITHINE CARBAMOYLTRANSFERASE, MITOCHONDRIAL"/>
    <property type="match status" value="1"/>
</dbReference>
<dbReference type="Pfam" id="PF00185">
    <property type="entry name" value="OTCace"/>
    <property type="match status" value="1"/>
</dbReference>
<dbReference type="Pfam" id="PF02729">
    <property type="entry name" value="OTCace_N"/>
    <property type="match status" value="1"/>
</dbReference>
<dbReference type="PRINTS" id="PR00100">
    <property type="entry name" value="AOTCASE"/>
</dbReference>
<dbReference type="PRINTS" id="PR00101">
    <property type="entry name" value="ATCASE"/>
</dbReference>
<dbReference type="SUPFAM" id="SSF53671">
    <property type="entry name" value="Aspartate/ornithine carbamoyltransferase"/>
    <property type="match status" value="1"/>
</dbReference>
<dbReference type="PROSITE" id="PS00097">
    <property type="entry name" value="CARBAMOYLTRANSFERASE"/>
    <property type="match status" value="1"/>
</dbReference>
<protein>
    <recommendedName>
        <fullName evidence="1">Aspartate carbamoyltransferase catalytic subunit</fullName>
        <ecNumber evidence="1">2.1.3.2</ecNumber>
    </recommendedName>
    <alternativeName>
        <fullName evidence="1">Aspartate transcarbamylase</fullName>
        <shortName evidence="1">ATCase</shortName>
    </alternativeName>
</protein>
<name>PYRB_CHLP8</name>
<comment type="function">
    <text evidence="1">Catalyzes the condensation of carbamoyl phosphate and aspartate to form carbamoyl aspartate and inorganic phosphate, the committed step in the de novo pyrimidine nucleotide biosynthesis pathway.</text>
</comment>
<comment type="catalytic activity">
    <reaction evidence="1">
        <text>carbamoyl phosphate + L-aspartate = N-carbamoyl-L-aspartate + phosphate + H(+)</text>
        <dbReference type="Rhea" id="RHEA:20013"/>
        <dbReference type="ChEBI" id="CHEBI:15378"/>
        <dbReference type="ChEBI" id="CHEBI:29991"/>
        <dbReference type="ChEBI" id="CHEBI:32814"/>
        <dbReference type="ChEBI" id="CHEBI:43474"/>
        <dbReference type="ChEBI" id="CHEBI:58228"/>
        <dbReference type="EC" id="2.1.3.2"/>
    </reaction>
</comment>
<comment type="pathway">
    <text evidence="1">Pyrimidine metabolism; UMP biosynthesis via de novo pathway; (S)-dihydroorotate from bicarbonate: step 2/3.</text>
</comment>
<comment type="subunit">
    <text evidence="1">Heterododecamer (2C3:3R2) of six catalytic PyrB chains organized as two trimers (C3), and six regulatory PyrI chains organized as three dimers (R2).</text>
</comment>
<comment type="similarity">
    <text evidence="1">Belongs to the aspartate/ornithine carbamoyltransferase superfamily. ATCase family.</text>
</comment>
<feature type="chain" id="PRO_1000088748" description="Aspartate carbamoyltransferase catalytic subunit">
    <location>
        <begin position="1"/>
        <end position="308"/>
    </location>
</feature>
<feature type="binding site" evidence="1">
    <location>
        <position position="55"/>
    </location>
    <ligand>
        <name>carbamoyl phosphate</name>
        <dbReference type="ChEBI" id="CHEBI:58228"/>
    </ligand>
</feature>
<feature type="binding site" evidence="1">
    <location>
        <position position="56"/>
    </location>
    <ligand>
        <name>carbamoyl phosphate</name>
        <dbReference type="ChEBI" id="CHEBI:58228"/>
    </ligand>
</feature>
<feature type="binding site" evidence="1">
    <location>
        <position position="83"/>
    </location>
    <ligand>
        <name>L-aspartate</name>
        <dbReference type="ChEBI" id="CHEBI:29991"/>
    </ligand>
</feature>
<feature type="binding site" evidence="1">
    <location>
        <position position="105"/>
    </location>
    <ligand>
        <name>carbamoyl phosphate</name>
        <dbReference type="ChEBI" id="CHEBI:58228"/>
    </ligand>
</feature>
<feature type="binding site" evidence="1">
    <location>
        <position position="133"/>
    </location>
    <ligand>
        <name>carbamoyl phosphate</name>
        <dbReference type="ChEBI" id="CHEBI:58228"/>
    </ligand>
</feature>
<feature type="binding site" evidence="1">
    <location>
        <position position="136"/>
    </location>
    <ligand>
        <name>carbamoyl phosphate</name>
        <dbReference type="ChEBI" id="CHEBI:58228"/>
    </ligand>
</feature>
<feature type="binding site" evidence="1">
    <location>
        <position position="166"/>
    </location>
    <ligand>
        <name>L-aspartate</name>
        <dbReference type="ChEBI" id="CHEBI:29991"/>
    </ligand>
</feature>
<feature type="binding site" evidence="1">
    <location>
        <position position="220"/>
    </location>
    <ligand>
        <name>L-aspartate</name>
        <dbReference type="ChEBI" id="CHEBI:29991"/>
    </ligand>
</feature>
<feature type="binding site" evidence="1">
    <location>
        <position position="261"/>
    </location>
    <ligand>
        <name>carbamoyl phosphate</name>
        <dbReference type="ChEBI" id="CHEBI:58228"/>
    </ligand>
</feature>
<feature type="binding site" evidence="1">
    <location>
        <position position="262"/>
    </location>
    <ligand>
        <name>carbamoyl phosphate</name>
        <dbReference type="ChEBI" id="CHEBI:58228"/>
    </ligand>
</feature>
<gene>
    <name evidence="1" type="primary">pyrB</name>
    <name type="ordered locus">Cpar_1641</name>
</gene>